<gene>
    <name evidence="1" type="primary">rplJ</name>
    <name type="ordered locus">PTH_0308</name>
</gene>
<sequence>MPITRAEKEAIIQELKEKFKEARVAVLADYRGLNVAEATRLRRRLREAGCEFKVAKNTLTGLAARQAGLEGLDPYLEGPIAIAFGVDPVAPAKVLSDFIRETRKMEIKAGVLEGTIIDARRVRDLADLPPREVLLARVLGGMQAPLYGFAGALQGTLRKFIYALEAIRKQKAGEA</sequence>
<reference key="1">
    <citation type="journal article" date="2008" name="Genome Res.">
        <title>The genome of Pelotomaculum thermopropionicum reveals niche-associated evolution in anaerobic microbiota.</title>
        <authorList>
            <person name="Kosaka T."/>
            <person name="Kato S."/>
            <person name="Shimoyama T."/>
            <person name="Ishii S."/>
            <person name="Abe T."/>
            <person name="Watanabe K."/>
        </authorList>
    </citation>
    <scope>NUCLEOTIDE SEQUENCE [LARGE SCALE GENOMIC DNA]</scope>
    <source>
        <strain>DSM 13744 / JCM 10971 / SI</strain>
    </source>
</reference>
<dbReference type="EMBL" id="AP009389">
    <property type="protein sequence ID" value="BAF58489.1"/>
    <property type="molecule type" value="Genomic_DNA"/>
</dbReference>
<dbReference type="SMR" id="A5D5H8"/>
<dbReference type="STRING" id="370438.PTH_0308"/>
<dbReference type="KEGG" id="pth:PTH_0308"/>
<dbReference type="eggNOG" id="COG0244">
    <property type="taxonomic scope" value="Bacteria"/>
</dbReference>
<dbReference type="HOGENOM" id="CLU_092227_2_0_9"/>
<dbReference type="Proteomes" id="UP000006556">
    <property type="component" value="Chromosome"/>
</dbReference>
<dbReference type="GO" id="GO:0015934">
    <property type="term" value="C:large ribosomal subunit"/>
    <property type="evidence" value="ECO:0007669"/>
    <property type="project" value="InterPro"/>
</dbReference>
<dbReference type="GO" id="GO:0070180">
    <property type="term" value="F:large ribosomal subunit rRNA binding"/>
    <property type="evidence" value="ECO:0007669"/>
    <property type="project" value="UniProtKB-UniRule"/>
</dbReference>
<dbReference type="GO" id="GO:0003735">
    <property type="term" value="F:structural constituent of ribosome"/>
    <property type="evidence" value="ECO:0007669"/>
    <property type="project" value="InterPro"/>
</dbReference>
<dbReference type="GO" id="GO:0006412">
    <property type="term" value="P:translation"/>
    <property type="evidence" value="ECO:0007669"/>
    <property type="project" value="UniProtKB-UniRule"/>
</dbReference>
<dbReference type="CDD" id="cd05797">
    <property type="entry name" value="Ribosomal_L10"/>
    <property type="match status" value="1"/>
</dbReference>
<dbReference type="Gene3D" id="3.30.70.1730">
    <property type="match status" value="1"/>
</dbReference>
<dbReference type="Gene3D" id="6.10.250.290">
    <property type="match status" value="1"/>
</dbReference>
<dbReference type="HAMAP" id="MF_00362">
    <property type="entry name" value="Ribosomal_uL10"/>
    <property type="match status" value="1"/>
</dbReference>
<dbReference type="InterPro" id="IPR001790">
    <property type="entry name" value="Ribosomal_uL10"/>
</dbReference>
<dbReference type="InterPro" id="IPR043141">
    <property type="entry name" value="Ribosomal_uL10-like_sf"/>
</dbReference>
<dbReference type="InterPro" id="IPR022973">
    <property type="entry name" value="Ribosomal_uL10_bac"/>
</dbReference>
<dbReference type="InterPro" id="IPR047865">
    <property type="entry name" value="Ribosomal_uL10_bac_type"/>
</dbReference>
<dbReference type="InterPro" id="IPR002363">
    <property type="entry name" value="Ribosomal_uL10_CS_bac"/>
</dbReference>
<dbReference type="NCBIfam" id="NF000955">
    <property type="entry name" value="PRK00099.1-1"/>
    <property type="match status" value="1"/>
</dbReference>
<dbReference type="PANTHER" id="PTHR11560">
    <property type="entry name" value="39S RIBOSOMAL PROTEIN L10, MITOCHONDRIAL"/>
    <property type="match status" value="1"/>
</dbReference>
<dbReference type="Pfam" id="PF00466">
    <property type="entry name" value="Ribosomal_L10"/>
    <property type="match status" value="1"/>
</dbReference>
<dbReference type="SUPFAM" id="SSF160369">
    <property type="entry name" value="Ribosomal protein L10-like"/>
    <property type="match status" value="1"/>
</dbReference>
<dbReference type="PROSITE" id="PS01109">
    <property type="entry name" value="RIBOSOMAL_L10"/>
    <property type="match status" value="1"/>
</dbReference>
<feature type="chain" id="PRO_1000079552" description="Large ribosomal subunit protein uL10">
    <location>
        <begin position="1"/>
        <end position="175"/>
    </location>
</feature>
<accession>A5D5H8</accession>
<proteinExistence type="inferred from homology"/>
<evidence type="ECO:0000255" key="1">
    <source>
        <dbReference type="HAMAP-Rule" id="MF_00362"/>
    </source>
</evidence>
<evidence type="ECO:0000305" key="2"/>
<name>RL10_PELTS</name>
<keyword id="KW-1185">Reference proteome</keyword>
<keyword id="KW-0687">Ribonucleoprotein</keyword>
<keyword id="KW-0689">Ribosomal protein</keyword>
<keyword id="KW-0694">RNA-binding</keyword>
<keyword id="KW-0699">rRNA-binding</keyword>
<organism>
    <name type="scientific">Pelotomaculum thermopropionicum (strain DSM 13744 / JCM 10971 / SI)</name>
    <dbReference type="NCBI Taxonomy" id="370438"/>
    <lineage>
        <taxon>Bacteria</taxon>
        <taxon>Bacillati</taxon>
        <taxon>Bacillota</taxon>
        <taxon>Clostridia</taxon>
        <taxon>Eubacteriales</taxon>
        <taxon>Desulfotomaculaceae</taxon>
        <taxon>Pelotomaculum</taxon>
    </lineage>
</organism>
<comment type="function">
    <text evidence="1">Forms part of the ribosomal stalk, playing a central role in the interaction of the ribosome with GTP-bound translation factors.</text>
</comment>
<comment type="subunit">
    <text evidence="1">Part of the ribosomal stalk of the 50S ribosomal subunit. The N-terminus interacts with L11 and the large rRNA to form the base of the stalk. The C-terminus forms an elongated spine to which L12 dimers bind in a sequential fashion forming a multimeric L10(L12)X complex.</text>
</comment>
<comment type="similarity">
    <text evidence="1">Belongs to the universal ribosomal protein uL10 family.</text>
</comment>
<protein>
    <recommendedName>
        <fullName evidence="1">Large ribosomal subunit protein uL10</fullName>
    </recommendedName>
    <alternativeName>
        <fullName evidence="2">50S ribosomal protein L10</fullName>
    </alternativeName>
</protein>